<feature type="chain" id="PRO_0000185890" description="Probable glutathione transferase omega-2">
    <location>
        <begin position="1"/>
        <end position="254"/>
    </location>
</feature>
<feature type="domain" description="GST N-terminal">
    <location>
        <begin position="25"/>
        <end position="105"/>
    </location>
</feature>
<feature type="domain" description="GST C-terminal">
    <location>
        <begin position="110"/>
        <end position="239"/>
    </location>
</feature>
<feature type="active site" description="Nucleophile" evidence="2">
    <location>
        <position position="35"/>
    </location>
</feature>
<feature type="binding site" evidence="3">
    <location>
        <position position="62"/>
    </location>
    <ligand>
        <name>glutathione</name>
        <dbReference type="ChEBI" id="CHEBI:57925"/>
    </ligand>
</feature>
<feature type="binding site" evidence="2">
    <location>
        <position position="75"/>
    </location>
    <ligand>
        <name>glutathione</name>
        <dbReference type="ChEBI" id="CHEBI:57925"/>
    </ligand>
</feature>
<feature type="binding site" evidence="3">
    <location>
        <begin position="89"/>
        <end position="90"/>
    </location>
    <ligand>
        <name>glutathione</name>
        <dbReference type="ChEBI" id="CHEBI:57925"/>
    </ligand>
</feature>
<evidence type="ECO:0000250" key="1"/>
<evidence type="ECO:0000250" key="2">
    <source>
        <dbReference type="UniProtKB" id="P78417"/>
    </source>
</evidence>
<evidence type="ECO:0000250" key="3">
    <source>
        <dbReference type="UniProtKB" id="Q9H4Y5"/>
    </source>
</evidence>
<evidence type="ECO:0000305" key="4"/>
<comment type="function">
    <text evidence="1">Exhibits glutathione-dependent thiol transferase activity. Has dehydroascorbate reductase activity and may contribute to the recycling of ascorbic acid. Participates in the biotransformation of inorganic arsenic and reduces monomethylarsonic acid (MMA) (By similarity).</text>
</comment>
<comment type="catalytic activity">
    <reaction>
        <text>RX + glutathione = an S-substituted glutathione + a halide anion + H(+)</text>
        <dbReference type="Rhea" id="RHEA:16437"/>
        <dbReference type="ChEBI" id="CHEBI:15378"/>
        <dbReference type="ChEBI" id="CHEBI:16042"/>
        <dbReference type="ChEBI" id="CHEBI:17792"/>
        <dbReference type="ChEBI" id="CHEBI:57925"/>
        <dbReference type="ChEBI" id="CHEBI:90779"/>
        <dbReference type="EC" id="2.5.1.18"/>
    </reaction>
</comment>
<comment type="catalytic activity">
    <reaction>
        <text>L-dehydroascorbate + 2 glutathione = glutathione disulfide + L-ascorbate</text>
        <dbReference type="Rhea" id="RHEA:24424"/>
        <dbReference type="ChEBI" id="CHEBI:38290"/>
        <dbReference type="ChEBI" id="CHEBI:57925"/>
        <dbReference type="ChEBI" id="CHEBI:58297"/>
        <dbReference type="ChEBI" id="CHEBI:58539"/>
        <dbReference type="EC" id="1.8.5.1"/>
    </reaction>
</comment>
<comment type="catalytic activity">
    <reaction>
        <text>methylarsonate + 2 glutathione + H(+) = methylarsonous acid + glutathione disulfide + H2O</text>
        <dbReference type="Rhea" id="RHEA:15969"/>
        <dbReference type="ChEBI" id="CHEBI:15377"/>
        <dbReference type="ChEBI" id="CHEBI:15378"/>
        <dbReference type="ChEBI" id="CHEBI:17826"/>
        <dbReference type="ChEBI" id="CHEBI:33409"/>
        <dbReference type="ChEBI" id="CHEBI:57925"/>
        <dbReference type="ChEBI" id="CHEBI:58297"/>
        <dbReference type="EC" id="1.20.4.2"/>
    </reaction>
</comment>
<comment type="similarity">
    <text evidence="4">Belongs to the GST superfamily. Omega family.</text>
</comment>
<proteinExistence type="inferred from homology"/>
<accession>P34277</accession>
<accession>Q2L6Y9</accession>
<accession>Q304F1</accession>
<accession>Q304F2</accession>
<accession>Q8I7N0</accession>
<name>GSTO2_CAEEL</name>
<sequence length="254" mass="28799">MSVLSGLNTKVVKNGDPAPAPPASGTIRIYNMRYCPWAQRALIFASLKKIPTEVINIHLDQKPDWFFTKHYKGQVPALEHDEGKKIVIESAVIPEYLDDIYPEPRIIPTDHYEKVQQKLLLDRISGQLSSAFYGVVQAAKISDLLKEKLVELAKAYDTAEELLTGDFYSGTSKPGFVDYLIYPNIQRAFWTSHIIKDFPLKVESFPGPNYPKLSKWYKRLDSIPEVIATSQPTETAVEFFKSWIIGAPNFDYGL</sequence>
<organism>
    <name type="scientific">Caenorhabditis elegans</name>
    <dbReference type="NCBI Taxonomy" id="6239"/>
    <lineage>
        <taxon>Eukaryota</taxon>
        <taxon>Metazoa</taxon>
        <taxon>Ecdysozoa</taxon>
        <taxon>Nematoda</taxon>
        <taxon>Chromadorea</taxon>
        <taxon>Rhabditida</taxon>
        <taxon>Rhabditina</taxon>
        <taxon>Rhabditomorpha</taxon>
        <taxon>Rhabditoidea</taxon>
        <taxon>Rhabditidae</taxon>
        <taxon>Peloderinae</taxon>
        <taxon>Caenorhabditis</taxon>
    </lineage>
</organism>
<protein>
    <recommendedName>
        <fullName>Probable glutathione transferase omega-2</fullName>
        <ecNumber>2.5.1.18</ecNumber>
    </recommendedName>
    <alternativeName>
        <fullName>Glutathione-dependent dehydroascorbate reductase</fullName>
        <ecNumber>1.8.5.1</ecNumber>
    </alternativeName>
    <alternativeName>
        <fullName>Monomethylarsonic acid reductase</fullName>
        <shortName>MMA(V) reductase</shortName>
        <ecNumber>1.20.4.2</ecNumber>
    </alternativeName>
</protein>
<reference key="1">
    <citation type="journal article" date="1994" name="Nature">
        <title>2.2 Mb of contiguous nucleotide sequence from chromosome III of C. elegans.</title>
        <authorList>
            <person name="Wilson R."/>
            <person name="Ainscough R."/>
            <person name="Anderson K."/>
            <person name="Baynes C."/>
            <person name="Berks M."/>
            <person name="Bonfield J."/>
            <person name="Burton J."/>
            <person name="Connell M."/>
            <person name="Copsey T."/>
            <person name="Cooper J."/>
            <person name="Coulson A."/>
            <person name="Craxton M."/>
            <person name="Dear S."/>
            <person name="Du Z."/>
            <person name="Durbin R."/>
            <person name="Favello A."/>
            <person name="Fraser A."/>
            <person name="Fulton L."/>
            <person name="Gardner A."/>
            <person name="Green P."/>
            <person name="Hawkins T."/>
            <person name="Hillier L."/>
            <person name="Jier M."/>
            <person name="Johnston L."/>
            <person name="Jones M."/>
            <person name="Kershaw J."/>
            <person name="Kirsten J."/>
            <person name="Laisster N."/>
            <person name="Latreille P."/>
            <person name="Lightning J."/>
            <person name="Lloyd C."/>
            <person name="Mortimore B."/>
            <person name="O'Callaghan M."/>
            <person name="Parsons J."/>
            <person name="Percy C."/>
            <person name="Rifken L."/>
            <person name="Roopra A."/>
            <person name="Saunders D."/>
            <person name="Shownkeen R."/>
            <person name="Sims M."/>
            <person name="Smaldon N."/>
            <person name="Smith A."/>
            <person name="Smith M."/>
            <person name="Sonnhammer E."/>
            <person name="Staden R."/>
            <person name="Sulston J."/>
            <person name="Thierry-Mieg J."/>
            <person name="Thomas K."/>
            <person name="Vaudin M."/>
            <person name="Vaughan K."/>
            <person name="Waterston R."/>
            <person name="Watson A."/>
            <person name="Weinstock L."/>
            <person name="Wilkinson-Sproat J."/>
            <person name="Wohldman P."/>
        </authorList>
    </citation>
    <scope>NUCLEOTIDE SEQUENCE [LARGE SCALE GENOMIC DNA]</scope>
    <source>
        <strain>Bristol N2</strain>
    </source>
</reference>
<reference key="2">
    <citation type="journal article" date="1998" name="Science">
        <title>Genome sequence of the nematode C. elegans: a platform for investigating biology.</title>
        <authorList>
            <consortium name="The C. elegans sequencing consortium"/>
        </authorList>
    </citation>
    <scope>NUCLEOTIDE SEQUENCE [LARGE SCALE GENOMIC DNA]</scope>
    <source>
        <strain>Bristol N2</strain>
    </source>
</reference>
<keyword id="KW-0560">Oxidoreductase</keyword>
<keyword id="KW-1185">Reference proteome</keyword>
<keyword id="KW-0677">Repeat</keyword>
<keyword id="KW-0808">Transferase</keyword>
<gene>
    <name type="primary">gsto-2</name>
    <name type="ORF">C02D5.3</name>
</gene>
<dbReference type="EC" id="2.5.1.18"/>
<dbReference type="EC" id="1.8.5.1"/>
<dbReference type="EC" id="1.20.4.2"/>
<dbReference type="EMBL" id="FO080279">
    <property type="protein sequence ID" value="CCD62560.1"/>
    <property type="molecule type" value="Genomic_DNA"/>
</dbReference>
<dbReference type="PIR" id="S44745">
    <property type="entry name" value="S44745"/>
</dbReference>
<dbReference type="RefSeq" id="NP_871705.3">
    <property type="nucleotide sequence ID" value="NM_181976.5"/>
</dbReference>
<dbReference type="SMR" id="P34277"/>
<dbReference type="BioGRID" id="57458">
    <property type="interactions" value="3"/>
</dbReference>
<dbReference type="FunCoup" id="P34277">
    <property type="interactions" value="634"/>
</dbReference>
<dbReference type="STRING" id="6239.C02D5.3.2"/>
<dbReference type="PaxDb" id="6239-C02D5.3"/>
<dbReference type="PeptideAtlas" id="P34277"/>
<dbReference type="EnsemblMetazoa" id="C02D5.3.1">
    <property type="protein sequence ID" value="C02D5.3.1"/>
    <property type="gene ID" value="WBGene00015337"/>
</dbReference>
<dbReference type="GeneID" id="353420"/>
<dbReference type="KEGG" id="cel:CELE_C02D5.3"/>
<dbReference type="AGR" id="WB:WBGene00015337"/>
<dbReference type="CTD" id="353420"/>
<dbReference type="WormBase" id="C02D5.3">
    <property type="protein sequence ID" value="CE39555"/>
    <property type="gene ID" value="WBGene00015337"/>
    <property type="gene designation" value="gsto-2"/>
</dbReference>
<dbReference type="eggNOG" id="KOG0406">
    <property type="taxonomic scope" value="Eukaryota"/>
</dbReference>
<dbReference type="GeneTree" id="ENSGT00940000163896"/>
<dbReference type="HOGENOM" id="CLU_011226_9_2_1"/>
<dbReference type="InParanoid" id="P34277"/>
<dbReference type="OMA" id="PDADIHP"/>
<dbReference type="OrthoDB" id="4951845at2759"/>
<dbReference type="PhylomeDB" id="P34277"/>
<dbReference type="Reactome" id="R-CEL-156590">
    <property type="pathway name" value="Glutathione conjugation"/>
</dbReference>
<dbReference type="Reactome" id="R-CEL-196836">
    <property type="pathway name" value="Vitamin C (ascorbate) metabolism"/>
</dbReference>
<dbReference type="PRO" id="PR:P34277"/>
<dbReference type="Proteomes" id="UP000001940">
    <property type="component" value="Chromosome III"/>
</dbReference>
<dbReference type="Bgee" id="WBGene00015337">
    <property type="expression patterns" value="Expressed in pharyngeal muscle cell (C elegans) and 2 other cell types or tissues"/>
</dbReference>
<dbReference type="GO" id="GO:0005737">
    <property type="term" value="C:cytoplasm"/>
    <property type="evidence" value="ECO:0000318"/>
    <property type="project" value="GO_Central"/>
</dbReference>
<dbReference type="GO" id="GO:0045174">
    <property type="term" value="F:glutathione dehydrogenase (ascorbate) activity"/>
    <property type="evidence" value="ECO:0000318"/>
    <property type="project" value="GO_Central"/>
</dbReference>
<dbReference type="GO" id="GO:0004364">
    <property type="term" value="F:glutathione transferase activity"/>
    <property type="evidence" value="ECO:0000318"/>
    <property type="project" value="GO_Central"/>
</dbReference>
<dbReference type="GO" id="GO:0050610">
    <property type="term" value="F:methylarsonate reductase activity"/>
    <property type="evidence" value="ECO:0007669"/>
    <property type="project" value="UniProtKB-EC"/>
</dbReference>
<dbReference type="GO" id="GO:0006749">
    <property type="term" value="P:glutathione metabolic process"/>
    <property type="evidence" value="ECO:0000318"/>
    <property type="project" value="GO_Central"/>
</dbReference>
<dbReference type="FunFam" id="1.20.1050.10:FF:000009">
    <property type="entry name" value="Glutathione S-transferase omega-1"/>
    <property type="match status" value="1"/>
</dbReference>
<dbReference type="FunFam" id="3.40.30.10:FF:000123">
    <property type="entry name" value="Glutathione transferase o1"/>
    <property type="match status" value="1"/>
</dbReference>
<dbReference type="Gene3D" id="1.20.1050.10">
    <property type="match status" value="1"/>
</dbReference>
<dbReference type="Gene3D" id="3.40.30.10">
    <property type="entry name" value="Glutaredoxin"/>
    <property type="match status" value="1"/>
</dbReference>
<dbReference type="InterPro" id="IPR010987">
    <property type="entry name" value="Glutathione-S-Trfase_C-like"/>
</dbReference>
<dbReference type="InterPro" id="IPR036282">
    <property type="entry name" value="Glutathione-S-Trfase_C_sf"/>
</dbReference>
<dbReference type="InterPro" id="IPR040079">
    <property type="entry name" value="Glutathione_S-Trfase"/>
</dbReference>
<dbReference type="InterPro" id="IPR004045">
    <property type="entry name" value="Glutathione_S-Trfase_N"/>
</dbReference>
<dbReference type="InterPro" id="IPR004046">
    <property type="entry name" value="GST_C"/>
</dbReference>
<dbReference type="InterPro" id="IPR005442">
    <property type="entry name" value="GST_omega"/>
</dbReference>
<dbReference type="InterPro" id="IPR050983">
    <property type="entry name" value="GST_Omega/HSP26"/>
</dbReference>
<dbReference type="InterPro" id="IPR036249">
    <property type="entry name" value="Thioredoxin-like_sf"/>
</dbReference>
<dbReference type="PANTHER" id="PTHR43968">
    <property type="match status" value="1"/>
</dbReference>
<dbReference type="PANTHER" id="PTHR43968:SF12">
    <property type="entry name" value="GLUTATHIONE S-TRANSFERASE OMEGA-RELATED"/>
    <property type="match status" value="1"/>
</dbReference>
<dbReference type="Pfam" id="PF00043">
    <property type="entry name" value="GST_C"/>
    <property type="match status" value="1"/>
</dbReference>
<dbReference type="Pfam" id="PF13417">
    <property type="entry name" value="GST_N_3"/>
    <property type="match status" value="1"/>
</dbReference>
<dbReference type="PRINTS" id="PR01625">
    <property type="entry name" value="GSTRNSFRASEO"/>
</dbReference>
<dbReference type="SFLD" id="SFLDS00019">
    <property type="entry name" value="Glutathione_Transferase_(cytos"/>
    <property type="match status" value="1"/>
</dbReference>
<dbReference type="SFLD" id="SFLDG00358">
    <property type="entry name" value="Main_(cytGST)"/>
    <property type="match status" value="1"/>
</dbReference>
<dbReference type="SUPFAM" id="SSF47616">
    <property type="entry name" value="GST C-terminal domain-like"/>
    <property type="match status" value="1"/>
</dbReference>
<dbReference type="SUPFAM" id="SSF52833">
    <property type="entry name" value="Thioredoxin-like"/>
    <property type="match status" value="1"/>
</dbReference>
<dbReference type="PROSITE" id="PS50405">
    <property type="entry name" value="GST_CTER"/>
    <property type="match status" value="1"/>
</dbReference>
<dbReference type="PROSITE" id="PS50404">
    <property type="entry name" value="GST_NTER"/>
    <property type="match status" value="1"/>
</dbReference>